<sequence length="427" mass="46825">MDLQYQSGFANHFSTEAVPGALPVGQNSPQAPPYGLYAEQLSGTAFTAPRHENRRSWLYRLRPSAGHGPYAPYVQERLKSGPFGAAVPTPNRLRWDPLEIPEAPLDFVDGLVTLAGNGDVATQAGMAAHLYLANRSMIDRVFQNADGELLIVPQLGALRFVTELGVIDAAPGEVVVIPRGVRFRVELEGPVRGYVCENYGPMFRLPELGPIGSNGLANSRDFLTPVAAFEDVERPTEVIQKFQGGLWTGTWDHSPLDVVAWHGNLAPYKYDLARFNTMGTVSFDHPDPSIFTVLTAPSEIPGTANVDFVIFPPRWMVAEHTFRPPWFHRNVMSEFMGLVTGAYDAKAGGFSPGGASLHNMMSDHGPDVASHKAASEADLSPHKIEATMAFMFESRWVIRPTKYALETSELQADYDACWTGFPKAKLP</sequence>
<accession>B0T816</accession>
<reference key="1">
    <citation type="submission" date="2008-01" db="EMBL/GenBank/DDBJ databases">
        <title>Complete sequence of chromosome of Caulobacter sp. K31.</title>
        <authorList>
            <consortium name="US DOE Joint Genome Institute"/>
            <person name="Copeland A."/>
            <person name="Lucas S."/>
            <person name="Lapidus A."/>
            <person name="Barry K."/>
            <person name="Glavina del Rio T."/>
            <person name="Dalin E."/>
            <person name="Tice H."/>
            <person name="Pitluck S."/>
            <person name="Bruce D."/>
            <person name="Goodwin L."/>
            <person name="Thompson L.S."/>
            <person name="Brettin T."/>
            <person name="Detter J.C."/>
            <person name="Han C."/>
            <person name="Schmutz J."/>
            <person name="Larimer F."/>
            <person name="Land M."/>
            <person name="Hauser L."/>
            <person name="Kyrpides N."/>
            <person name="Kim E."/>
            <person name="Stephens C."/>
            <person name="Richardson P."/>
        </authorList>
    </citation>
    <scope>NUCLEOTIDE SEQUENCE [LARGE SCALE GENOMIC DNA]</scope>
    <source>
        <strain>K31</strain>
    </source>
</reference>
<name>HGD_CAUSK</name>
<dbReference type="EC" id="1.13.11.5" evidence="1"/>
<dbReference type="EMBL" id="CP000927">
    <property type="protein sequence ID" value="ABZ72779.1"/>
    <property type="molecule type" value="Genomic_DNA"/>
</dbReference>
<dbReference type="SMR" id="B0T816"/>
<dbReference type="STRING" id="366602.Caul_3652"/>
<dbReference type="KEGG" id="cak:Caul_3652"/>
<dbReference type="eggNOG" id="COG3508">
    <property type="taxonomic scope" value="Bacteria"/>
</dbReference>
<dbReference type="HOGENOM" id="CLU_027174_0_0_5"/>
<dbReference type="OrthoDB" id="9811253at2"/>
<dbReference type="UniPathway" id="UPA00139">
    <property type="reaction ID" value="UER00339"/>
</dbReference>
<dbReference type="GO" id="GO:0005737">
    <property type="term" value="C:cytoplasm"/>
    <property type="evidence" value="ECO:0007669"/>
    <property type="project" value="TreeGrafter"/>
</dbReference>
<dbReference type="GO" id="GO:0004411">
    <property type="term" value="F:homogentisate 1,2-dioxygenase activity"/>
    <property type="evidence" value="ECO:0007669"/>
    <property type="project" value="UniProtKB-UniRule"/>
</dbReference>
<dbReference type="GO" id="GO:0005506">
    <property type="term" value="F:iron ion binding"/>
    <property type="evidence" value="ECO:0007669"/>
    <property type="project" value="UniProtKB-UniRule"/>
</dbReference>
<dbReference type="GO" id="GO:0006559">
    <property type="term" value="P:L-phenylalanine catabolic process"/>
    <property type="evidence" value="ECO:0007669"/>
    <property type="project" value="UniProtKB-UniRule"/>
</dbReference>
<dbReference type="GO" id="GO:0006572">
    <property type="term" value="P:tyrosine catabolic process"/>
    <property type="evidence" value="ECO:0007669"/>
    <property type="project" value="UniProtKB-UniRule"/>
</dbReference>
<dbReference type="CDD" id="cd07000">
    <property type="entry name" value="cupin_HGO_N"/>
    <property type="match status" value="1"/>
</dbReference>
<dbReference type="FunFam" id="2.60.120.10:FF:000034">
    <property type="entry name" value="Homogentisate 1,2-dioxygenase"/>
    <property type="match status" value="1"/>
</dbReference>
<dbReference type="Gene3D" id="2.60.120.10">
    <property type="entry name" value="Jelly Rolls"/>
    <property type="match status" value="1"/>
</dbReference>
<dbReference type="HAMAP" id="MF_00334">
    <property type="entry name" value="Homogentis_dioxygen"/>
    <property type="match status" value="1"/>
</dbReference>
<dbReference type="InterPro" id="IPR046451">
    <property type="entry name" value="HgmA_C"/>
</dbReference>
<dbReference type="InterPro" id="IPR046452">
    <property type="entry name" value="HgmA_N"/>
</dbReference>
<dbReference type="InterPro" id="IPR005708">
    <property type="entry name" value="Homogentis_dOase"/>
</dbReference>
<dbReference type="InterPro" id="IPR022950">
    <property type="entry name" value="Homogentis_dOase_bac"/>
</dbReference>
<dbReference type="InterPro" id="IPR014710">
    <property type="entry name" value="RmlC-like_jellyroll"/>
</dbReference>
<dbReference type="InterPro" id="IPR011051">
    <property type="entry name" value="RmlC_Cupin_sf"/>
</dbReference>
<dbReference type="NCBIfam" id="TIGR01015">
    <property type="entry name" value="hmgA"/>
    <property type="match status" value="1"/>
</dbReference>
<dbReference type="PANTHER" id="PTHR11056">
    <property type="entry name" value="HOMOGENTISATE 1,2-DIOXYGENASE"/>
    <property type="match status" value="1"/>
</dbReference>
<dbReference type="PANTHER" id="PTHR11056:SF0">
    <property type="entry name" value="HOMOGENTISATE 1,2-DIOXYGENASE"/>
    <property type="match status" value="1"/>
</dbReference>
<dbReference type="Pfam" id="PF04209">
    <property type="entry name" value="HgmA_C"/>
    <property type="match status" value="1"/>
</dbReference>
<dbReference type="Pfam" id="PF20510">
    <property type="entry name" value="HgmA_N"/>
    <property type="match status" value="1"/>
</dbReference>
<dbReference type="SUPFAM" id="SSF51182">
    <property type="entry name" value="RmlC-like cupins"/>
    <property type="match status" value="1"/>
</dbReference>
<protein>
    <recommendedName>
        <fullName evidence="1">Homogentisate 1,2-dioxygenase</fullName>
        <shortName evidence="1">HGDO</shortName>
        <ecNumber evidence="1">1.13.11.5</ecNumber>
    </recommendedName>
    <alternativeName>
        <fullName evidence="1">Homogentisate oxygenase</fullName>
    </alternativeName>
    <alternativeName>
        <fullName evidence="1">Homogentisic acid oxidase</fullName>
    </alternativeName>
    <alternativeName>
        <fullName evidence="1">Homogentisicase</fullName>
    </alternativeName>
</protein>
<gene>
    <name evidence="1" type="primary">hmgA</name>
    <name type="ordered locus">Caul_3652</name>
</gene>
<proteinExistence type="inferred from homology"/>
<organism>
    <name type="scientific">Caulobacter sp. (strain K31)</name>
    <dbReference type="NCBI Taxonomy" id="366602"/>
    <lineage>
        <taxon>Bacteria</taxon>
        <taxon>Pseudomonadati</taxon>
        <taxon>Pseudomonadota</taxon>
        <taxon>Alphaproteobacteria</taxon>
        <taxon>Caulobacterales</taxon>
        <taxon>Caulobacteraceae</taxon>
        <taxon>Caulobacter</taxon>
    </lineage>
</organism>
<feature type="chain" id="PRO_1000079265" description="Homogentisate 1,2-dioxygenase">
    <location>
        <begin position="1"/>
        <end position="427"/>
    </location>
</feature>
<feature type="active site" description="Proton acceptor" evidence="1">
    <location>
        <position position="285"/>
    </location>
</feature>
<feature type="binding site" evidence="1">
    <location>
        <position position="328"/>
    </location>
    <ligand>
        <name>Fe cation</name>
        <dbReference type="ChEBI" id="CHEBI:24875"/>
    </ligand>
</feature>
<feature type="binding site" evidence="1">
    <location>
        <position position="334"/>
    </location>
    <ligand>
        <name>Fe cation</name>
        <dbReference type="ChEBI" id="CHEBI:24875"/>
    </ligand>
</feature>
<feature type="binding site" evidence="1">
    <location>
        <position position="343"/>
    </location>
    <ligand>
        <name>homogentisate</name>
        <dbReference type="ChEBI" id="CHEBI:16169"/>
    </ligand>
</feature>
<feature type="binding site" evidence="1">
    <location>
        <position position="364"/>
    </location>
    <ligand>
        <name>Fe cation</name>
        <dbReference type="ChEBI" id="CHEBI:24875"/>
    </ligand>
</feature>
<feature type="binding site" evidence="1">
    <location>
        <position position="364"/>
    </location>
    <ligand>
        <name>homogentisate</name>
        <dbReference type="ChEBI" id="CHEBI:16169"/>
    </ligand>
</feature>
<comment type="function">
    <text evidence="1">Involved in the catabolism of homogentisate (2,5-dihydroxyphenylacetate or 2,5-OH-PhAc), a central intermediate in the degradation of phenylalanine and tyrosine. Catalyzes the oxidative ring cleavage of the aromatic ring of homogentisate to yield maleylacetoacetate.</text>
</comment>
<comment type="catalytic activity">
    <reaction evidence="1">
        <text>homogentisate + O2 = 4-maleylacetoacetate + H(+)</text>
        <dbReference type="Rhea" id="RHEA:15449"/>
        <dbReference type="ChEBI" id="CHEBI:15378"/>
        <dbReference type="ChEBI" id="CHEBI:15379"/>
        <dbReference type="ChEBI" id="CHEBI:16169"/>
        <dbReference type="ChEBI" id="CHEBI:17105"/>
        <dbReference type="EC" id="1.13.11.5"/>
    </reaction>
</comment>
<comment type="cofactor">
    <cofactor evidence="1">
        <name>Fe cation</name>
        <dbReference type="ChEBI" id="CHEBI:24875"/>
    </cofactor>
</comment>
<comment type="pathway">
    <text evidence="1">Amino-acid degradation; L-phenylalanine degradation; acetoacetate and fumarate from L-phenylalanine: step 4/6.</text>
</comment>
<comment type="subunit">
    <text evidence="1">Hexamer; dimer of trimers.</text>
</comment>
<comment type="similarity">
    <text evidence="1">Belongs to the homogentisate dioxygenase family.</text>
</comment>
<evidence type="ECO:0000255" key="1">
    <source>
        <dbReference type="HAMAP-Rule" id="MF_00334"/>
    </source>
</evidence>
<keyword id="KW-0223">Dioxygenase</keyword>
<keyword id="KW-0408">Iron</keyword>
<keyword id="KW-0479">Metal-binding</keyword>
<keyword id="KW-0560">Oxidoreductase</keyword>
<keyword id="KW-0585">Phenylalanine catabolism</keyword>
<keyword id="KW-0828">Tyrosine catabolism</keyword>